<reference key="1">
    <citation type="journal article" date="2005" name="Nature">
        <title>The genome of the social amoeba Dictyostelium discoideum.</title>
        <authorList>
            <person name="Eichinger L."/>
            <person name="Pachebat J.A."/>
            <person name="Gloeckner G."/>
            <person name="Rajandream M.A."/>
            <person name="Sucgang R."/>
            <person name="Berriman M."/>
            <person name="Song J."/>
            <person name="Olsen R."/>
            <person name="Szafranski K."/>
            <person name="Xu Q."/>
            <person name="Tunggal B."/>
            <person name="Kummerfeld S."/>
            <person name="Madera M."/>
            <person name="Konfortov B.A."/>
            <person name="Rivero F."/>
            <person name="Bankier A.T."/>
            <person name="Lehmann R."/>
            <person name="Hamlin N."/>
            <person name="Davies R."/>
            <person name="Gaudet P."/>
            <person name="Fey P."/>
            <person name="Pilcher K."/>
            <person name="Chen G."/>
            <person name="Saunders D."/>
            <person name="Sodergren E.J."/>
            <person name="Davis P."/>
            <person name="Kerhornou A."/>
            <person name="Nie X."/>
            <person name="Hall N."/>
            <person name="Anjard C."/>
            <person name="Hemphill L."/>
            <person name="Bason N."/>
            <person name="Farbrother P."/>
            <person name="Desany B."/>
            <person name="Just E."/>
            <person name="Morio T."/>
            <person name="Rost R."/>
            <person name="Churcher C.M."/>
            <person name="Cooper J."/>
            <person name="Haydock S."/>
            <person name="van Driessche N."/>
            <person name="Cronin A."/>
            <person name="Goodhead I."/>
            <person name="Muzny D.M."/>
            <person name="Mourier T."/>
            <person name="Pain A."/>
            <person name="Lu M."/>
            <person name="Harper D."/>
            <person name="Lindsay R."/>
            <person name="Hauser H."/>
            <person name="James K.D."/>
            <person name="Quiles M."/>
            <person name="Madan Babu M."/>
            <person name="Saito T."/>
            <person name="Buchrieser C."/>
            <person name="Wardroper A."/>
            <person name="Felder M."/>
            <person name="Thangavelu M."/>
            <person name="Johnson D."/>
            <person name="Knights A."/>
            <person name="Loulseged H."/>
            <person name="Mungall K.L."/>
            <person name="Oliver K."/>
            <person name="Price C."/>
            <person name="Quail M.A."/>
            <person name="Urushihara H."/>
            <person name="Hernandez J."/>
            <person name="Rabbinowitsch E."/>
            <person name="Steffen D."/>
            <person name="Sanders M."/>
            <person name="Ma J."/>
            <person name="Kohara Y."/>
            <person name="Sharp S."/>
            <person name="Simmonds M.N."/>
            <person name="Spiegler S."/>
            <person name="Tivey A."/>
            <person name="Sugano S."/>
            <person name="White B."/>
            <person name="Walker D."/>
            <person name="Woodward J.R."/>
            <person name="Winckler T."/>
            <person name="Tanaka Y."/>
            <person name="Shaulsky G."/>
            <person name="Schleicher M."/>
            <person name="Weinstock G.M."/>
            <person name="Rosenthal A."/>
            <person name="Cox E.C."/>
            <person name="Chisholm R.L."/>
            <person name="Gibbs R.A."/>
            <person name="Loomis W.F."/>
            <person name="Platzer M."/>
            <person name="Kay R.R."/>
            <person name="Williams J.G."/>
            <person name="Dear P.H."/>
            <person name="Noegel A.A."/>
            <person name="Barrell B.G."/>
            <person name="Kuspa A."/>
        </authorList>
    </citation>
    <scope>NUCLEOTIDE SEQUENCE [LARGE SCALE GENOMIC DNA]</scope>
    <source>
        <strain>AX4</strain>
    </source>
</reference>
<proteinExistence type="predicted"/>
<organism>
    <name type="scientific">Dictyostelium discoideum</name>
    <name type="common">Social amoeba</name>
    <dbReference type="NCBI Taxonomy" id="44689"/>
    <lineage>
        <taxon>Eukaryota</taxon>
        <taxon>Amoebozoa</taxon>
        <taxon>Evosea</taxon>
        <taxon>Eumycetozoa</taxon>
        <taxon>Dictyostelia</taxon>
        <taxon>Dictyosteliales</taxon>
        <taxon>Dictyosteliaceae</taxon>
        <taxon>Dictyostelium</taxon>
    </lineage>
</organism>
<accession>Q54DK0</accession>
<dbReference type="EMBL" id="AAFI02000188">
    <property type="protein sequence ID" value="EAL61336.1"/>
    <property type="molecule type" value="Genomic_DNA"/>
</dbReference>
<dbReference type="RefSeq" id="XP_629727.1">
    <property type="nucleotide sequence ID" value="XM_629725.1"/>
</dbReference>
<dbReference type="SMR" id="Q54DK0"/>
<dbReference type="FunCoup" id="Q54DK0">
    <property type="interactions" value="363"/>
</dbReference>
<dbReference type="STRING" id="44689.Q54DK0"/>
<dbReference type="GlyGen" id="Q54DK0">
    <property type="glycosylation" value="1 site"/>
</dbReference>
<dbReference type="PaxDb" id="44689-DDB0302367"/>
<dbReference type="EnsemblProtists" id="EAL61336">
    <property type="protein sequence ID" value="EAL61336"/>
    <property type="gene ID" value="DDB_G0292252"/>
</dbReference>
<dbReference type="GeneID" id="8628555"/>
<dbReference type="KEGG" id="ddi:DDB_G0292252"/>
<dbReference type="dictyBase" id="DDB_G0292252"/>
<dbReference type="VEuPathDB" id="AmoebaDB:DDB_G0292252"/>
<dbReference type="eggNOG" id="ENOG502SGIE">
    <property type="taxonomic scope" value="Eukaryota"/>
</dbReference>
<dbReference type="HOGENOM" id="CLU_265322_0_0_1"/>
<dbReference type="InParanoid" id="Q54DK0"/>
<dbReference type="OMA" id="THNVFWD"/>
<dbReference type="Reactome" id="R-DDI-114604">
    <property type="pathway name" value="GPVI-mediated activation cascade"/>
</dbReference>
<dbReference type="Reactome" id="R-DDI-1660499">
    <property type="pathway name" value="Synthesis of PIPs at the plasma membrane"/>
</dbReference>
<dbReference type="Reactome" id="R-DDI-392451">
    <property type="pathway name" value="G beta:gamma signalling through PI3Kgamma"/>
</dbReference>
<dbReference type="PRO" id="PR:Q54DK0"/>
<dbReference type="Proteomes" id="UP000002195">
    <property type="component" value="Chromosome 6"/>
</dbReference>
<dbReference type="GO" id="GO:0005942">
    <property type="term" value="C:phosphatidylinositol 3-kinase complex"/>
    <property type="evidence" value="ECO:0000318"/>
    <property type="project" value="GO_Central"/>
</dbReference>
<dbReference type="GO" id="GO:0005944">
    <property type="term" value="C:phosphatidylinositol 3-kinase complex, class IB"/>
    <property type="evidence" value="ECO:0007669"/>
    <property type="project" value="InterPro"/>
</dbReference>
<dbReference type="GO" id="GO:0046935">
    <property type="term" value="F:1-phosphatidylinositol-3-kinase regulator activity"/>
    <property type="evidence" value="ECO:0000318"/>
    <property type="project" value="GO_Central"/>
</dbReference>
<dbReference type="GO" id="GO:0007186">
    <property type="term" value="P:G protein-coupled receptor signaling pathway"/>
    <property type="evidence" value="ECO:0000318"/>
    <property type="project" value="GO_Central"/>
</dbReference>
<dbReference type="InterPro" id="IPR019522">
    <property type="entry name" value="PIK3R5/6"/>
</dbReference>
<dbReference type="PANTHER" id="PTHR15593">
    <property type="entry name" value="PHOSPHATIDYLINOSITOL 3-KINASE REGULATORY SUBUNIT"/>
    <property type="match status" value="1"/>
</dbReference>
<dbReference type="PANTHER" id="PTHR15593:SF3">
    <property type="entry name" value="PROTEIN DDB_G0292252-RELATED"/>
    <property type="match status" value="1"/>
</dbReference>
<sequence>MSDDNNSNNMSNNNNNNNNNNNNNNNNNNNNNNNNNNNSNNNNSNNNNENNNNKSFQIQPILIQISEILQQSIELKLCSSVNTHNVFWDTLLYNLELNGDAISMIISLLLTKYILLLNNENNQYSLLQALFTKLTNASVEEFNDLLNGNNSNNNSNNNNNNNNNNNNNNNNNNNNNNNNNNNNNNNNNNNNNNNNNNNNNNNNSNGNNINTSNGNEDDVEQQTESTEQDFTSTSQNSTPSISRLASKLSQTDLDSFNLSISETNLTGVNYSSVSPQQSSPPLISTSSTGSLSNDYININNNNNSNSNININTSGTNDSDSTTTFSINGINMSSEEIKESETIRLSILSTIGYLSLFHKFNPQFPTLKVIIHKLGEIQLEKSRFEYSLHNEVLRILQTNNQDNNDFLFFLIDQCSDQNSSNLDNLKLNNNINKINSWYNPSIRKILREESVSKSKAVFEHLLLFLKHPLLSEKRVLFLLQMLKHYLLVIPVLSSLTIQSALSIVKTYYLWPKPYGCFAKEILEILSLELKSPGSYFRNILAREFPSIMSSPNSIGSASLTNTLFTNKNRPTIHFLVDKYNSEALLIQELFEANYNTYTPSITQLQSNNIENIYKRILGIDNSQLGIEFLEPIDVSTIHFKILDVMNKTMYLEENESKSIRIKELISIRDEIIKFCNLSTNSNSNLNSTTTTATTTNILKHVPKNIELPNLNYQFISMLTLSVRHKRPDQFGTPFYIPINRKSTTSLIDLLSNYQDQDFHNQVKFAIIGNDTSVQHILASYLFLKYQQPELFHSLDIMFYIIPTGTSNCKIAELISSFDPWYTNQVRQCLVSLYSIIPSFPPISKLSKIERQSFIESISQIKDLRNSIALKENELEQQQQQQPQQPQQQNSDVASIILNEQQQQQQQQQSNLNNSNNEIKNDINSSTTAATTTTTTTTTTTTTTIHKDNPVETPSHTIQTEIEYLFREASFSLEIPVLKCEGWGIDDNNYFTIPFLMKAEMNTSTFLAGFSDLISSDPTQINKLMGKYSPMNVNIKILQCNQMGVPLQWINIDNKTFYDIEINNIMPKSISHPTIQSTSSPSTSSSNNNNSTTTATNNNGNNGNNNNGNGNNNNNNNNNNNNNNNNNNNNNNGPATISSSLKKSIIQSKPKMQLVLIEAEQKKKKVKSSEDTFKFTINAIEMESIDKKKSFDILLDGQLHGPFNKIKISFCSSNISNIINNAAKNSSSSNSSNYSIGFNDLQDNDFITFPIMSFLPLV</sequence>
<feature type="chain" id="PRO_0000344385" description="Putative protein DDB_G0292252">
    <location>
        <begin position="1"/>
        <end position="1256"/>
    </location>
</feature>
<feature type="region of interest" description="Disordered" evidence="1">
    <location>
        <begin position="1"/>
        <end position="53"/>
    </location>
</feature>
<feature type="region of interest" description="Disordered" evidence="1">
    <location>
        <begin position="145"/>
        <end position="243"/>
    </location>
</feature>
<feature type="region of interest" description="Disordered" evidence="1">
    <location>
        <begin position="898"/>
        <end position="951"/>
    </location>
</feature>
<feature type="region of interest" description="Disordered" evidence="1">
    <location>
        <begin position="1069"/>
        <end position="1136"/>
    </location>
</feature>
<feature type="compositionally biased region" description="Low complexity" evidence="1">
    <location>
        <begin position="147"/>
        <end position="214"/>
    </location>
</feature>
<feature type="compositionally biased region" description="Polar residues" evidence="1">
    <location>
        <begin position="222"/>
        <end position="243"/>
    </location>
</feature>
<feature type="compositionally biased region" description="Low complexity" evidence="1">
    <location>
        <begin position="898"/>
        <end position="916"/>
    </location>
</feature>
<feature type="compositionally biased region" description="Low complexity" evidence="1">
    <location>
        <begin position="925"/>
        <end position="942"/>
    </location>
</feature>
<feature type="compositionally biased region" description="Polar residues" evidence="1">
    <location>
        <begin position="1069"/>
        <end position="1079"/>
    </location>
</feature>
<feature type="compositionally biased region" description="Low complexity" evidence="1">
    <location>
        <begin position="1080"/>
        <end position="1136"/>
    </location>
</feature>
<gene>
    <name type="ORF">DDB_G0292252</name>
</gene>
<evidence type="ECO:0000256" key="1">
    <source>
        <dbReference type="SAM" id="MobiDB-lite"/>
    </source>
</evidence>
<keyword id="KW-1185">Reference proteome</keyword>
<name>Y9625_DICDI</name>
<protein>
    <recommendedName>
        <fullName>Putative protein DDB_G0292252</fullName>
    </recommendedName>
</protein>